<name>NDHJ_PHYPA</name>
<protein>
    <recommendedName>
        <fullName evidence="1">NAD(P)H-quinone oxidoreductase subunit J, chloroplastic</fullName>
        <ecNumber evidence="1">7.1.1.-</ecNumber>
    </recommendedName>
    <alternativeName>
        <fullName>NAD(P)H dehydrogenase subunit J</fullName>
    </alternativeName>
    <alternativeName>
        <fullName evidence="1">NADH-plastoquinone oxidoreductase subunit J</fullName>
    </alternativeName>
</protein>
<dbReference type="EC" id="7.1.1.-" evidence="1"/>
<dbReference type="EMBL" id="AP005672">
    <property type="protein sequence ID" value="BAC85049.1"/>
    <property type="molecule type" value="Genomic_DNA"/>
</dbReference>
<dbReference type="RefSeq" id="NP_904199.3">
    <property type="nucleotide sequence ID" value="NC_005087.2"/>
</dbReference>
<dbReference type="SMR" id="Q6YXQ8"/>
<dbReference type="FunCoup" id="Q6YXQ8">
    <property type="interactions" value="35"/>
</dbReference>
<dbReference type="STRING" id="3218.Q6YXQ8"/>
<dbReference type="GeneID" id="2546732"/>
<dbReference type="KEGG" id="ppp:2546732"/>
<dbReference type="InParanoid" id="Q6YXQ8"/>
<dbReference type="OrthoDB" id="1909959at2759"/>
<dbReference type="Proteomes" id="UP000006727">
    <property type="component" value="Chloroplast"/>
</dbReference>
<dbReference type="GO" id="GO:0009535">
    <property type="term" value="C:chloroplast thylakoid membrane"/>
    <property type="evidence" value="ECO:0007669"/>
    <property type="project" value="UniProtKB-SubCell"/>
</dbReference>
<dbReference type="GO" id="GO:0008137">
    <property type="term" value="F:NADH dehydrogenase (ubiquinone) activity"/>
    <property type="evidence" value="ECO:0007669"/>
    <property type="project" value="InterPro"/>
</dbReference>
<dbReference type="GO" id="GO:0048038">
    <property type="term" value="F:quinone binding"/>
    <property type="evidence" value="ECO:0007669"/>
    <property type="project" value="UniProtKB-KW"/>
</dbReference>
<dbReference type="GO" id="GO:0019684">
    <property type="term" value="P:photosynthesis, light reaction"/>
    <property type="evidence" value="ECO:0007669"/>
    <property type="project" value="UniProtKB-UniRule"/>
</dbReference>
<dbReference type="Gene3D" id="3.30.460.80">
    <property type="entry name" value="NADH:ubiquinone oxidoreductase, 30kDa subunit"/>
    <property type="match status" value="1"/>
</dbReference>
<dbReference type="HAMAP" id="MF_01357">
    <property type="entry name" value="NDH1_NuoC"/>
    <property type="match status" value="1"/>
</dbReference>
<dbReference type="InterPro" id="IPR010218">
    <property type="entry name" value="NADH_DH_suC"/>
</dbReference>
<dbReference type="InterPro" id="IPR037232">
    <property type="entry name" value="NADH_quin_OxRdtase_su_C/D-like"/>
</dbReference>
<dbReference type="InterPro" id="IPR001268">
    <property type="entry name" value="NADH_UbQ_OxRdtase_30kDa_su"/>
</dbReference>
<dbReference type="InterPro" id="IPR020396">
    <property type="entry name" value="NADH_UbQ_OxRdtase_CS"/>
</dbReference>
<dbReference type="NCBIfam" id="NF009141">
    <property type="entry name" value="PRK12494.1"/>
    <property type="match status" value="1"/>
</dbReference>
<dbReference type="PANTHER" id="PTHR10884:SF14">
    <property type="entry name" value="NADH DEHYDROGENASE [UBIQUINONE] IRON-SULFUR PROTEIN 3, MITOCHONDRIAL"/>
    <property type="match status" value="1"/>
</dbReference>
<dbReference type="PANTHER" id="PTHR10884">
    <property type="entry name" value="NADH DEHYDROGENASE UBIQUINONE IRON-SULFUR PROTEIN 3"/>
    <property type="match status" value="1"/>
</dbReference>
<dbReference type="Pfam" id="PF00329">
    <property type="entry name" value="Complex1_30kDa"/>
    <property type="match status" value="1"/>
</dbReference>
<dbReference type="SUPFAM" id="SSF143243">
    <property type="entry name" value="Nqo5-like"/>
    <property type="match status" value="1"/>
</dbReference>
<dbReference type="PROSITE" id="PS00542">
    <property type="entry name" value="COMPLEX1_30K"/>
    <property type="match status" value="1"/>
</dbReference>
<proteinExistence type="inferred from homology"/>
<evidence type="ECO:0000255" key="1">
    <source>
        <dbReference type="HAMAP-Rule" id="MF_01357"/>
    </source>
</evidence>
<gene>
    <name evidence="1" type="primary">ndhJ</name>
</gene>
<reference key="1">
    <citation type="journal article" date="2003" name="Nucleic Acids Res.">
        <title>Complete chloroplast DNA sequence of the moss Physcomitrella patens: evidence for the loss and relocation of rpoA from the chloroplast to the nucleus.</title>
        <authorList>
            <person name="Sugiura C."/>
            <person name="Kobayashi Y."/>
            <person name="Setsuyuki A."/>
            <person name="Sugita C."/>
            <person name="Sugita M."/>
        </authorList>
    </citation>
    <scope>NUCLEOTIDE SEQUENCE [LARGE SCALE GENOMIC DNA]</scope>
    <source>
        <strain>cv. Gransden 2004</strain>
    </source>
</reference>
<feature type="chain" id="PRO_0000358297" description="NAD(P)H-quinone oxidoreductase subunit J, chloroplastic">
    <location>
        <begin position="1"/>
        <end position="169"/>
    </location>
</feature>
<sequence length="169" mass="19902">MLNTYTNSSTKIQGRLSVWLANHKLPHRPLGFDYQGVEILQIRSEDWLSIAVALYVYGFNYLRSQCAYDVAPGGLLASVYHFTKIEDNVDQPEEICIKIFVSRQKPKIPSVFWIWKSADFQERESYDMLGISYENHPRLKRILMPDTWIGWPLRKDYIVPDFYELQDAY</sequence>
<comment type="function">
    <text evidence="1">NDH shuttles electrons from NAD(P)H:plastoquinone, via FMN and iron-sulfur (Fe-S) centers, to quinones in the photosynthetic chain and possibly in a chloroplast respiratory chain. The immediate electron acceptor for the enzyme in this species is believed to be plastoquinone. Couples the redox reaction to proton translocation, and thus conserves the redox energy in a proton gradient.</text>
</comment>
<comment type="catalytic activity">
    <reaction evidence="1">
        <text>a plastoquinone + NADH + (n+1) H(+)(in) = a plastoquinol + NAD(+) + n H(+)(out)</text>
        <dbReference type="Rhea" id="RHEA:42608"/>
        <dbReference type="Rhea" id="RHEA-COMP:9561"/>
        <dbReference type="Rhea" id="RHEA-COMP:9562"/>
        <dbReference type="ChEBI" id="CHEBI:15378"/>
        <dbReference type="ChEBI" id="CHEBI:17757"/>
        <dbReference type="ChEBI" id="CHEBI:57540"/>
        <dbReference type="ChEBI" id="CHEBI:57945"/>
        <dbReference type="ChEBI" id="CHEBI:62192"/>
    </reaction>
</comment>
<comment type="catalytic activity">
    <reaction evidence="1">
        <text>a plastoquinone + NADPH + (n+1) H(+)(in) = a plastoquinol + NADP(+) + n H(+)(out)</text>
        <dbReference type="Rhea" id="RHEA:42612"/>
        <dbReference type="Rhea" id="RHEA-COMP:9561"/>
        <dbReference type="Rhea" id="RHEA-COMP:9562"/>
        <dbReference type="ChEBI" id="CHEBI:15378"/>
        <dbReference type="ChEBI" id="CHEBI:17757"/>
        <dbReference type="ChEBI" id="CHEBI:57783"/>
        <dbReference type="ChEBI" id="CHEBI:58349"/>
        <dbReference type="ChEBI" id="CHEBI:62192"/>
    </reaction>
</comment>
<comment type="subunit">
    <text evidence="1">NDH is composed of at least 16 different subunits, 5 of which are encoded in the nucleus.</text>
</comment>
<comment type="subcellular location">
    <subcellularLocation>
        <location evidence="1">Plastid</location>
        <location evidence="1">Chloroplast thylakoid membrane</location>
        <topology evidence="1">Peripheral membrane protein</topology>
        <orientation evidence="1">Stromal side</orientation>
    </subcellularLocation>
</comment>
<comment type="similarity">
    <text evidence="1">Belongs to the complex I 30 kDa subunit family.</text>
</comment>
<organism>
    <name type="scientific">Physcomitrium patens</name>
    <name type="common">Spreading-leaved earth moss</name>
    <name type="synonym">Physcomitrella patens</name>
    <dbReference type="NCBI Taxonomy" id="3218"/>
    <lineage>
        <taxon>Eukaryota</taxon>
        <taxon>Viridiplantae</taxon>
        <taxon>Streptophyta</taxon>
        <taxon>Embryophyta</taxon>
        <taxon>Bryophyta</taxon>
        <taxon>Bryophytina</taxon>
        <taxon>Bryopsida</taxon>
        <taxon>Funariidae</taxon>
        <taxon>Funariales</taxon>
        <taxon>Funariaceae</taxon>
        <taxon>Physcomitrium</taxon>
    </lineage>
</organism>
<accession>Q6YXQ8</accession>
<geneLocation type="chloroplast"/>
<keyword id="KW-0150">Chloroplast</keyword>
<keyword id="KW-0472">Membrane</keyword>
<keyword id="KW-0520">NAD</keyword>
<keyword id="KW-0521">NADP</keyword>
<keyword id="KW-0934">Plastid</keyword>
<keyword id="KW-0618">Plastoquinone</keyword>
<keyword id="KW-0874">Quinone</keyword>
<keyword id="KW-1185">Reference proteome</keyword>
<keyword id="KW-0793">Thylakoid</keyword>
<keyword id="KW-1278">Translocase</keyword>
<keyword id="KW-0813">Transport</keyword>